<organism>
    <name type="scientific">Synechococcus sp. (strain JA-3-3Ab)</name>
    <name type="common">Cyanobacteria bacterium Yellowstone A-Prime</name>
    <dbReference type="NCBI Taxonomy" id="321327"/>
    <lineage>
        <taxon>Bacteria</taxon>
        <taxon>Bacillati</taxon>
        <taxon>Cyanobacteriota</taxon>
        <taxon>Cyanophyceae</taxon>
        <taxon>Synechococcales</taxon>
        <taxon>Synechococcaceae</taxon>
        <taxon>Synechococcus</taxon>
    </lineage>
</organism>
<protein>
    <recommendedName>
        <fullName evidence="1">Uroporphyrinogen decarboxylase</fullName>
        <shortName evidence="1">UPD</shortName>
        <shortName evidence="1">URO-D</shortName>
        <ecNumber evidence="1">4.1.1.37</ecNumber>
    </recommendedName>
</protein>
<accession>Q2JX97</accession>
<feature type="chain" id="PRO_0000325702" description="Uroporphyrinogen decarboxylase">
    <location>
        <begin position="1"/>
        <end position="362"/>
    </location>
</feature>
<feature type="binding site" evidence="1">
    <location>
        <begin position="39"/>
        <end position="43"/>
    </location>
    <ligand>
        <name>substrate</name>
    </ligand>
</feature>
<feature type="binding site" evidence="1">
    <location>
        <position position="88"/>
    </location>
    <ligand>
        <name>substrate</name>
    </ligand>
</feature>
<feature type="binding site" evidence="1">
    <location>
        <position position="165"/>
    </location>
    <ligand>
        <name>substrate</name>
    </ligand>
</feature>
<feature type="binding site" evidence="1">
    <location>
        <position position="220"/>
    </location>
    <ligand>
        <name>substrate</name>
    </ligand>
</feature>
<feature type="binding site" evidence="1">
    <location>
        <position position="334"/>
    </location>
    <ligand>
        <name>substrate</name>
    </ligand>
</feature>
<feature type="site" description="Transition state stabilizer" evidence="1">
    <location>
        <position position="88"/>
    </location>
</feature>
<keyword id="KW-0963">Cytoplasm</keyword>
<keyword id="KW-0210">Decarboxylase</keyword>
<keyword id="KW-0456">Lyase</keyword>
<keyword id="KW-0627">Porphyrin biosynthesis</keyword>
<proteinExistence type="inferred from homology"/>
<comment type="function">
    <text evidence="1">Catalyzes the decarboxylation of four acetate groups of uroporphyrinogen-III to yield coproporphyrinogen-III.</text>
</comment>
<comment type="catalytic activity">
    <reaction evidence="1">
        <text>uroporphyrinogen III + 4 H(+) = coproporphyrinogen III + 4 CO2</text>
        <dbReference type="Rhea" id="RHEA:19865"/>
        <dbReference type="ChEBI" id="CHEBI:15378"/>
        <dbReference type="ChEBI" id="CHEBI:16526"/>
        <dbReference type="ChEBI" id="CHEBI:57308"/>
        <dbReference type="ChEBI" id="CHEBI:57309"/>
        <dbReference type="EC" id="4.1.1.37"/>
    </reaction>
</comment>
<comment type="pathway">
    <text evidence="1">Porphyrin-containing compound metabolism; protoporphyrin-IX biosynthesis; coproporphyrinogen-III from 5-aminolevulinate: step 4/4.</text>
</comment>
<comment type="subunit">
    <text evidence="1">Homodimer.</text>
</comment>
<comment type="subcellular location">
    <subcellularLocation>
        <location evidence="1">Cytoplasm</location>
    </subcellularLocation>
</comment>
<comment type="similarity">
    <text evidence="1">Belongs to the uroporphyrinogen decarboxylase family.</text>
</comment>
<sequence>MSHSPAQLSASPSSVGDGDRLLRAARGEVVDRPPVWMMRQAGRYMAAYRELQSKYTFKQRCEIPELAIEISLQPFRAFAPDGVIMFSDILTPLEGMGIPFELVEQQGPIIDPPIRSQAQVEQIRLLEPEESLPFIKTILSTLRREVEGKATLLGFVGSPWTLACYAVEGRSSKDYAHIKSLAFTQPQVLHQLLSKLADSIARYVIYQIECGAQVVQLFDTWAGQLSPGDYETWALPYQKQIVDQVKARCPQVPLILYINGSAALLERVGKAGIDVFSLDWMSDMAEARARLGSLAVQGNLDPMVLLGSPKFIRQRTLEVIQKAGSRGHIMNLGHGVHHTTPEANVHHFFETVRQAAELLKAL</sequence>
<dbReference type="EC" id="4.1.1.37" evidence="1"/>
<dbReference type="EMBL" id="CP000239">
    <property type="protein sequence ID" value="ABC98595.1"/>
    <property type="molecule type" value="Genomic_DNA"/>
</dbReference>
<dbReference type="RefSeq" id="WP_011429284.1">
    <property type="nucleotide sequence ID" value="NC_007775.1"/>
</dbReference>
<dbReference type="SMR" id="Q2JX97"/>
<dbReference type="STRING" id="321327.CYA_0376"/>
<dbReference type="KEGG" id="cya:CYA_0376"/>
<dbReference type="eggNOG" id="COG0407">
    <property type="taxonomic scope" value="Bacteria"/>
</dbReference>
<dbReference type="HOGENOM" id="CLU_040933_0_2_3"/>
<dbReference type="OrthoDB" id="9806656at2"/>
<dbReference type="UniPathway" id="UPA00251">
    <property type="reaction ID" value="UER00321"/>
</dbReference>
<dbReference type="Proteomes" id="UP000008818">
    <property type="component" value="Chromosome"/>
</dbReference>
<dbReference type="GO" id="GO:0005737">
    <property type="term" value="C:cytoplasm"/>
    <property type="evidence" value="ECO:0007669"/>
    <property type="project" value="UniProtKB-SubCell"/>
</dbReference>
<dbReference type="GO" id="GO:0004853">
    <property type="term" value="F:uroporphyrinogen decarboxylase activity"/>
    <property type="evidence" value="ECO:0007669"/>
    <property type="project" value="UniProtKB-UniRule"/>
</dbReference>
<dbReference type="GO" id="GO:0006782">
    <property type="term" value="P:protoporphyrinogen IX biosynthetic process"/>
    <property type="evidence" value="ECO:0007669"/>
    <property type="project" value="UniProtKB-UniRule"/>
</dbReference>
<dbReference type="CDD" id="cd00717">
    <property type="entry name" value="URO-D"/>
    <property type="match status" value="1"/>
</dbReference>
<dbReference type="FunFam" id="3.20.20.210:FF:000006">
    <property type="entry name" value="Uroporphyrinogen decarboxylase"/>
    <property type="match status" value="1"/>
</dbReference>
<dbReference type="Gene3D" id="3.20.20.210">
    <property type="match status" value="1"/>
</dbReference>
<dbReference type="HAMAP" id="MF_00218">
    <property type="entry name" value="URO_D"/>
    <property type="match status" value="1"/>
</dbReference>
<dbReference type="InterPro" id="IPR038071">
    <property type="entry name" value="UROD/MetE-like_sf"/>
</dbReference>
<dbReference type="InterPro" id="IPR006361">
    <property type="entry name" value="Uroporphyrinogen_deCO2ase_HemE"/>
</dbReference>
<dbReference type="InterPro" id="IPR000257">
    <property type="entry name" value="Uroporphyrinogen_deCOase"/>
</dbReference>
<dbReference type="NCBIfam" id="TIGR01464">
    <property type="entry name" value="hemE"/>
    <property type="match status" value="1"/>
</dbReference>
<dbReference type="PANTHER" id="PTHR21091">
    <property type="entry name" value="METHYLTETRAHYDROFOLATE:HOMOCYSTEINE METHYLTRANSFERASE RELATED"/>
    <property type="match status" value="1"/>
</dbReference>
<dbReference type="PANTHER" id="PTHR21091:SF169">
    <property type="entry name" value="UROPORPHYRINOGEN DECARBOXYLASE"/>
    <property type="match status" value="1"/>
</dbReference>
<dbReference type="Pfam" id="PF01208">
    <property type="entry name" value="URO-D"/>
    <property type="match status" value="1"/>
</dbReference>
<dbReference type="SUPFAM" id="SSF51726">
    <property type="entry name" value="UROD/MetE-like"/>
    <property type="match status" value="1"/>
</dbReference>
<dbReference type="PROSITE" id="PS00906">
    <property type="entry name" value="UROD_1"/>
    <property type="match status" value="1"/>
</dbReference>
<dbReference type="PROSITE" id="PS00907">
    <property type="entry name" value="UROD_2"/>
    <property type="match status" value="1"/>
</dbReference>
<reference key="1">
    <citation type="journal article" date="2007" name="ISME J.">
        <title>Population level functional diversity in a microbial community revealed by comparative genomic and metagenomic analyses.</title>
        <authorList>
            <person name="Bhaya D."/>
            <person name="Grossman A.R."/>
            <person name="Steunou A.-S."/>
            <person name="Khuri N."/>
            <person name="Cohan F.M."/>
            <person name="Hamamura N."/>
            <person name="Melendrez M.C."/>
            <person name="Bateson M.M."/>
            <person name="Ward D.M."/>
            <person name="Heidelberg J.F."/>
        </authorList>
    </citation>
    <scope>NUCLEOTIDE SEQUENCE [LARGE SCALE GENOMIC DNA]</scope>
    <source>
        <strain>JA-3-3Ab</strain>
    </source>
</reference>
<evidence type="ECO:0000255" key="1">
    <source>
        <dbReference type="HAMAP-Rule" id="MF_00218"/>
    </source>
</evidence>
<name>DCUP_SYNJA</name>
<gene>
    <name evidence="1" type="primary">hemE</name>
    <name type="ordered locus">CYA_0376</name>
</gene>